<name>NADD_CLOK5</name>
<protein>
    <recommendedName>
        <fullName evidence="1">Probable nicotinate-nucleotide adenylyltransferase</fullName>
        <ecNumber evidence="1">2.7.7.18</ecNumber>
    </recommendedName>
    <alternativeName>
        <fullName evidence="1">Deamido-NAD(+) diphosphorylase</fullName>
    </alternativeName>
    <alternativeName>
        <fullName evidence="1">Deamido-NAD(+) pyrophosphorylase</fullName>
    </alternativeName>
    <alternativeName>
        <fullName evidence="1">Nicotinate mononucleotide adenylyltransferase</fullName>
        <shortName evidence="1">NaMN adenylyltransferase</shortName>
    </alternativeName>
</protein>
<evidence type="ECO:0000255" key="1">
    <source>
        <dbReference type="HAMAP-Rule" id="MF_00244"/>
    </source>
</evidence>
<keyword id="KW-0067">ATP-binding</keyword>
<keyword id="KW-0520">NAD</keyword>
<keyword id="KW-0547">Nucleotide-binding</keyword>
<keyword id="KW-0548">Nucleotidyltransferase</keyword>
<keyword id="KW-0662">Pyridine nucleotide biosynthesis</keyword>
<keyword id="KW-1185">Reference proteome</keyword>
<keyword id="KW-0808">Transferase</keyword>
<sequence length="203" mass="23511">MVKKAIFGGTFDPIHNGHIHIAYEAIYRLGLDEIVFMPTGNPPHKAKKSITDAFLRYEMVKVAIRSESKFTVSNYEVNKTTLSYTYSTLEHFNKLESKTEWYFLTGADCLMDIEKWSRVDSIFRLCKFIVFNRPGFPAFTSESIEDQKKKIEDKYSTNIIYLDAPLFDISSTVIRNSVKEGKNVNYFLPESVCNIIKQLNLYK</sequence>
<dbReference type="EC" id="2.7.7.18" evidence="1"/>
<dbReference type="EMBL" id="CP000673">
    <property type="protein sequence ID" value="EDK32934.1"/>
    <property type="molecule type" value="Genomic_DNA"/>
</dbReference>
<dbReference type="RefSeq" id="WP_012101261.1">
    <property type="nucleotide sequence ID" value="NC_009706.1"/>
</dbReference>
<dbReference type="SMR" id="A5N6K3"/>
<dbReference type="STRING" id="431943.CKL_0883"/>
<dbReference type="KEGG" id="ckl:CKL_0883"/>
<dbReference type="eggNOG" id="COG1057">
    <property type="taxonomic scope" value="Bacteria"/>
</dbReference>
<dbReference type="HOGENOM" id="CLU_069765_0_1_9"/>
<dbReference type="UniPathway" id="UPA00253">
    <property type="reaction ID" value="UER00332"/>
</dbReference>
<dbReference type="Proteomes" id="UP000002411">
    <property type="component" value="Chromosome"/>
</dbReference>
<dbReference type="GO" id="GO:0005524">
    <property type="term" value="F:ATP binding"/>
    <property type="evidence" value="ECO:0007669"/>
    <property type="project" value="UniProtKB-KW"/>
</dbReference>
<dbReference type="GO" id="GO:0004515">
    <property type="term" value="F:nicotinate-nucleotide adenylyltransferase activity"/>
    <property type="evidence" value="ECO:0007669"/>
    <property type="project" value="UniProtKB-UniRule"/>
</dbReference>
<dbReference type="GO" id="GO:0009435">
    <property type="term" value="P:NAD biosynthetic process"/>
    <property type="evidence" value="ECO:0007669"/>
    <property type="project" value="UniProtKB-UniRule"/>
</dbReference>
<dbReference type="CDD" id="cd02165">
    <property type="entry name" value="NMNAT"/>
    <property type="match status" value="1"/>
</dbReference>
<dbReference type="Gene3D" id="3.40.50.620">
    <property type="entry name" value="HUPs"/>
    <property type="match status" value="1"/>
</dbReference>
<dbReference type="HAMAP" id="MF_00244">
    <property type="entry name" value="NaMN_adenylyltr"/>
    <property type="match status" value="1"/>
</dbReference>
<dbReference type="InterPro" id="IPR004821">
    <property type="entry name" value="Cyt_trans-like"/>
</dbReference>
<dbReference type="InterPro" id="IPR005248">
    <property type="entry name" value="NadD/NMNAT"/>
</dbReference>
<dbReference type="InterPro" id="IPR014729">
    <property type="entry name" value="Rossmann-like_a/b/a_fold"/>
</dbReference>
<dbReference type="NCBIfam" id="TIGR00125">
    <property type="entry name" value="cyt_tran_rel"/>
    <property type="match status" value="1"/>
</dbReference>
<dbReference type="NCBIfam" id="TIGR00482">
    <property type="entry name" value="nicotinate (nicotinamide) nucleotide adenylyltransferase"/>
    <property type="match status" value="1"/>
</dbReference>
<dbReference type="NCBIfam" id="NF000840">
    <property type="entry name" value="PRK00071.1-3"/>
    <property type="match status" value="1"/>
</dbReference>
<dbReference type="PANTHER" id="PTHR39321">
    <property type="entry name" value="NICOTINATE-NUCLEOTIDE ADENYLYLTRANSFERASE-RELATED"/>
    <property type="match status" value="1"/>
</dbReference>
<dbReference type="PANTHER" id="PTHR39321:SF3">
    <property type="entry name" value="PHOSPHOPANTETHEINE ADENYLYLTRANSFERASE"/>
    <property type="match status" value="1"/>
</dbReference>
<dbReference type="Pfam" id="PF01467">
    <property type="entry name" value="CTP_transf_like"/>
    <property type="match status" value="1"/>
</dbReference>
<dbReference type="SUPFAM" id="SSF52374">
    <property type="entry name" value="Nucleotidylyl transferase"/>
    <property type="match status" value="1"/>
</dbReference>
<proteinExistence type="inferred from homology"/>
<gene>
    <name evidence="1" type="primary">nadD</name>
    <name type="ordered locus">CKL_0883</name>
</gene>
<feature type="chain" id="PRO_1000078375" description="Probable nicotinate-nucleotide adenylyltransferase">
    <location>
        <begin position="1"/>
        <end position="203"/>
    </location>
</feature>
<comment type="function">
    <text evidence="1">Catalyzes the reversible adenylation of nicotinate mononucleotide (NaMN) to nicotinic acid adenine dinucleotide (NaAD).</text>
</comment>
<comment type="catalytic activity">
    <reaction evidence="1">
        <text>nicotinate beta-D-ribonucleotide + ATP + H(+) = deamido-NAD(+) + diphosphate</text>
        <dbReference type="Rhea" id="RHEA:22860"/>
        <dbReference type="ChEBI" id="CHEBI:15378"/>
        <dbReference type="ChEBI" id="CHEBI:30616"/>
        <dbReference type="ChEBI" id="CHEBI:33019"/>
        <dbReference type="ChEBI" id="CHEBI:57502"/>
        <dbReference type="ChEBI" id="CHEBI:58437"/>
        <dbReference type="EC" id="2.7.7.18"/>
    </reaction>
</comment>
<comment type="pathway">
    <text evidence="1">Cofactor biosynthesis; NAD(+) biosynthesis; deamido-NAD(+) from nicotinate D-ribonucleotide: step 1/1.</text>
</comment>
<comment type="similarity">
    <text evidence="1">Belongs to the NadD family.</text>
</comment>
<reference key="1">
    <citation type="journal article" date="2008" name="Proc. Natl. Acad. Sci. U.S.A.">
        <title>The genome of Clostridium kluyveri, a strict anaerobe with unique metabolic features.</title>
        <authorList>
            <person name="Seedorf H."/>
            <person name="Fricke W.F."/>
            <person name="Veith B."/>
            <person name="Brueggemann H."/>
            <person name="Liesegang H."/>
            <person name="Strittmatter A."/>
            <person name="Miethke M."/>
            <person name="Buckel W."/>
            <person name="Hinderberger J."/>
            <person name="Li F."/>
            <person name="Hagemeier C."/>
            <person name="Thauer R.K."/>
            <person name="Gottschalk G."/>
        </authorList>
    </citation>
    <scope>NUCLEOTIDE SEQUENCE [LARGE SCALE GENOMIC DNA]</scope>
    <source>
        <strain>ATCC 8527 / DSM 555 / NBRC 12016 / NCIMB 10680 / K1</strain>
    </source>
</reference>
<accession>A5N6K3</accession>
<organism>
    <name type="scientific">Clostridium kluyveri (strain ATCC 8527 / DSM 555 / NBRC 12016 / NCIMB 10680 / K1)</name>
    <dbReference type="NCBI Taxonomy" id="431943"/>
    <lineage>
        <taxon>Bacteria</taxon>
        <taxon>Bacillati</taxon>
        <taxon>Bacillota</taxon>
        <taxon>Clostridia</taxon>
        <taxon>Eubacteriales</taxon>
        <taxon>Clostridiaceae</taxon>
        <taxon>Clostridium</taxon>
    </lineage>
</organism>